<reference key="1">
    <citation type="patent" date="2004-07-27" number="US6767896">
        <title>Conotoxin peptides.</title>
        <authorList>
            <person name="McIntosh J.M."/>
            <person name="Olivera B.M."/>
            <person name="Cruz L.J."/>
            <person name="Corpuz G.P."/>
            <person name="Jones R.M."/>
            <person name="Garrett J.E."/>
        </authorList>
    </citation>
    <scope>NUCLEOTIDE SEQUENCE</scope>
</reference>
<reference key="2">
    <citation type="journal article" date="2012" name="J. Proteome Res.">
        <title>Constrained de novo sequencing of conotoxins.</title>
        <authorList>
            <person name="Bhatia S."/>
            <person name="Kil Y.J."/>
            <person name="Ueberheide B."/>
            <person name="Chait B.T."/>
            <person name="Tayo L."/>
            <person name="Cruz L."/>
            <person name="Lu B."/>
            <person name="Yates J.R. III"/>
            <person name="Bern M."/>
        </authorList>
    </citation>
    <scope>IDENTIFICATION BY MASS SPECTROMETRY</scope>
    <scope>SUBCELLULAR LOCATION</scope>
    <scope>HYDROXYLATION AT PRO-60</scope>
    <scope>AMIDATION AT CYS-61</scope>
    <source>
        <tissue>Venom</tissue>
    </source>
</reference>
<feature type="signal peptide" evidence="2">
    <location>
        <begin position="1"/>
        <end position="22"/>
    </location>
</feature>
<feature type="propeptide" id="PRO_0000445054" evidence="5">
    <location>
        <begin position="23"/>
        <end position="47"/>
    </location>
</feature>
<feature type="peptide" id="PRO_0000445055" description="Conotoxin TxIC" evidence="5">
    <location>
        <begin position="48"/>
        <end position="61"/>
    </location>
</feature>
<feature type="modified residue" description="4-hydroxyproline" evidence="4">
    <location>
        <position position="60"/>
    </location>
</feature>
<feature type="modified residue" description="Cysteine amide" evidence="4">
    <location>
        <position position="61"/>
    </location>
</feature>
<feature type="disulfide bond" evidence="1">
    <location>
        <begin position="52"/>
        <end position="58"/>
    </location>
</feature>
<feature type="disulfide bond" evidence="1">
    <location>
        <begin position="53"/>
        <end position="61"/>
    </location>
</feature>
<proteinExistence type="evidence at protein level"/>
<organism>
    <name type="scientific">Conus textile</name>
    <name type="common">Cloth-of-gold cone</name>
    <dbReference type="NCBI Taxonomy" id="6494"/>
    <lineage>
        <taxon>Eukaryota</taxon>
        <taxon>Metazoa</taxon>
        <taxon>Spiralia</taxon>
        <taxon>Lophotrochozoa</taxon>
        <taxon>Mollusca</taxon>
        <taxon>Gastropoda</taxon>
        <taxon>Caenogastropoda</taxon>
        <taxon>Neogastropoda</taxon>
        <taxon>Conoidea</taxon>
        <taxon>Conidae</taxon>
        <taxon>Conus</taxon>
        <taxon>Cylinder</taxon>
    </lineage>
</organism>
<keyword id="KW-0008">Acetylcholine receptor inhibiting toxin</keyword>
<keyword id="KW-0027">Amidation</keyword>
<keyword id="KW-1015">Disulfide bond</keyword>
<keyword id="KW-0379">Hydroxylation</keyword>
<keyword id="KW-0528">Neurotoxin</keyword>
<keyword id="KW-0629">Postsynaptic neurotoxin</keyword>
<keyword id="KW-0964">Secreted</keyword>
<keyword id="KW-0732">Signal</keyword>
<keyword id="KW-0800">Toxin</keyword>
<dbReference type="GO" id="GO:0005576">
    <property type="term" value="C:extracellular region"/>
    <property type="evidence" value="ECO:0007669"/>
    <property type="project" value="UniProtKB-SubCell"/>
</dbReference>
<dbReference type="GO" id="GO:0035792">
    <property type="term" value="C:host cell postsynaptic membrane"/>
    <property type="evidence" value="ECO:0007669"/>
    <property type="project" value="UniProtKB-KW"/>
</dbReference>
<dbReference type="GO" id="GO:0030550">
    <property type="term" value="F:acetylcholine receptor inhibitor activity"/>
    <property type="evidence" value="ECO:0007669"/>
    <property type="project" value="UniProtKB-KW"/>
</dbReference>
<dbReference type="GO" id="GO:0090729">
    <property type="term" value="F:toxin activity"/>
    <property type="evidence" value="ECO:0007669"/>
    <property type="project" value="UniProtKB-KW"/>
</dbReference>
<dbReference type="InterPro" id="IPR031565">
    <property type="entry name" value="T-conotoxin"/>
</dbReference>
<dbReference type="Pfam" id="PF16981">
    <property type="entry name" value="Chi-conotoxin"/>
    <property type="match status" value="1"/>
</dbReference>
<evidence type="ECO:0000250" key="1">
    <source>
        <dbReference type="UniProtKB" id="P0C1D0"/>
    </source>
</evidence>
<evidence type="ECO:0000255" key="2"/>
<evidence type="ECO:0000269" key="3">
    <source>
    </source>
</evidence>
<evidence type="ECO:0000269" key="4">
    <source ref="1"/>
</evidence>
<evidence type="ECO:0000305" key="5"/>
<evidence type="ECO:0000305" key="6">
    <source>
    </source>
</evidence>
<accession>P0DPL8</accession>
<sequence length="62" mass="6879">MHCLPIFVILLLLTASGPSVDAQLKTKDDVPLSSFRDHAKSTLRRLQDKQTCCGYRMCVPCG</sequence>
<comment type="subcellular location">
    <subcellularLocation>
        <location evidence="3">Secreted</location>
    </subcellularLocation>
</comment>
<comment type="tissue specificity">
    <text evidence="6">Expressed by the venom duct.</text>
</comment>
<comment type="domain">
    <text evidence="5">The cysteine framework is I (CC-C-C). Alpha4/2 pattern.</text>
</comment>
<comment type="similarity">
    <text evidence="5">Belongs to the conotoxin A superfamily.</text>
</comment>
<name>CA1CB_CONTE</name>
<protein>
    <recommendedName>
        <fullName evidence="5">Conotoxin TxIC</fullName>
    </recommendedName>
</protein>